<protein>
    <recommendedName>
        <fullName evidence="1">NADH-ubiquinone oxidoreductase chain 2</fullName>
        <ecNumber evidence="1">7.1.1.2</ecNumber>
    </recommendedName>
    <alternativeName>
        <fullName>NADH dehydrogenase subunit 2</fullName>
    </alternativeName>
</protein>
<evidence type="ECO:0000250" key="1">
    <source>
        <dbReference type="UniProtKB" id="P03891"/>
    </source>
</evidence>
<evidence type="ECO:0000250" key="2">
    <source>
        <dbReference type="UniProtKB" id="P03892"/>
    </source>
</evidence>
<evidence type="ECO:0000255" key="3"/>
<evidence type="ECO:0000305" key="4"/>
<evidence type="ECO:0000312" key="5">
    <source>
        <dbReference type="Proteomes" id="UP000002356"/>
    </source>
</evidence>
<evidence type="ECO:0007829" key="6">
    <source>
        <dbReference type="PDB" id="6ZKA"/>
    </source>
</evidence>
<evidence type="ECO:0007829" key="7">
    <source>
        <dbReference type="PDB" id="6ZKE"/>
    </source>
</evidence>
<evidence type="ECO:0007829" key="8">
    <source>
        <dbReference type="PDB" id="6ZKJ"/>
    </source>
</evidence>
<evidence type="ECO:0007829" key="9">
    <source>
        <dbReference type="PDB" id="6ZKV"/>
    </source>
</evidence>
<name>NU2M_SHEEP</name>
<keyword id="KW-0002">3D-structure</keyword>
<keyword id="KW-0249">Electron transport</keyword>
<keyword id="KW-0472">Membrane</keyword>
<keyword id="KW-0496">Mitochondrion</keyword>
<keyword id="KW-0999">Mitochondrion inner membrane</keyword>
<keyword id="KW-0520">NAD</keyword>
<keyword id="KW-1185">Reference proteome</keyword>
<keyword id="KW-0679">Respiratory chain</keyword>
<keyword id="KW-1278">Translocase</keyword>
<keyword id="KW-0812">Transmembrane</keyword>
<keyword id="KW-1133">Transmembrane helix</keyword>
<keyword id="KW-0813">Transport</keyword>
<keyword id="KW-0830">Ubiquinone</keyword>
<organism>
    <name type="scientific">Ovis aries</name>
    <name type="common">Sheep</name>
    <dbReference type="NCBI Taxonomy" id="9940"/>
    <lineage>
        <taxon>Eukaryota</taxon>
        <taxon>Metazoa</taxon>
        <taxon>Chordata</taxon>
        <taxon>Craniata</taxon>
        <taxon>Vertebrata</taxon>
        <taxon>Euteleostomi</taxon>
        <taxon>Mammalia</taxon>
        <taxon>Eutheria</taxon>
        <taxon>Laurasiatheria</taxon>
        <taxon>Artiodactyla</taxon>
        <taxon>Ruminantia</taxon>
        <taxon>Pecora</taxon>
        <taxon>Bovidae</taxon>
        <taxon>Caprinae</taxon>
        <taxon>Ovis</taxon>
    </lineage>
</organism>
<proteinExistence type="evidence at protein level"/>
<reference key="1">
    <citation type="journal article" date="1998" name="J. Mol. Evol.">
        <title>The complete mitochondrial DNA sequence of the domestic sheep (Ovis aries) and comparison with the other major ovine haplotype.</title>
        <authorList>
            <person name="Hiendleder S."/>
            <person name="Lewalski H."/>
            <person name="Wassmuth R."/>
            <person name="Janke A."/>
        </authorList>
    </citation>
    <scope>NUCLEOTIDE SEQUENCE [LARGE SCALE GENOMIC DNA]</scope>
    <source>
        <strain evidence="5">Merinolandschaf</strain>
        <tissue>Liver</tissue>
    </source>
</reference>
<geneLocation type="mitochondrion"/>
<accession>O78748</accession>
<dbReference type="EC" id="7.1.1.2" evidence="1"/>
<dbReference type="EMBL" id="AF010406">
    <property type="protein sequence ID" value="AAD10097.1"/>
    <property type="molecule type" value="Genomic_DNA"/>
</dbReference>
<dbReference type="PIR" id="T11051">
    <property type="entry name" value="T11051"/>
</dbReference>
<dbReference type="RefSeq" id="NP_008407.1">
    <property type="nucleotide sequence ID" value="NC_001941.1"/>
</dbReference>
<dbReference type="PDB" id="5LNK">
    <property type="method" value="EM"/>
    <property type="resolution" value="3.90 A"/>
    <property type="chains" value="N=1-347"/>
</dbReference>
<dbReference type="PDB" id="6Q9B">
    <property type="method" value="EM"/>
    <property type="resolution" value="3.90 A"/>
    <property type="chains" value="D2=1-347"/>
</dbReference>
<dbReference type="PDB" id="6QA9">
    <property type="method" value="EM"/>
    <property type="resolution" value="4.10 A"/>
    <property type="chains" value="D2=1-347"/>
</dbReference>
<dbReference type="PDB" id="6QBX">
    <property type="method" value="EM"/>
    <property type="resolution" value="4.20 A"/>
    <property type="chains" value="D2=1-347"/>
</dbReference>
<dbReference type="PDB" id="6QC2">
    <property type="method" value="EM"/>
    <property type="resolution" value="4.20 A"/>
    <property type="chains" value="D2=1-347"/>
</dbReference>
<dbReference type="PDB" id="6QC3">
    <property type="method" value="EM"/>
    <property type="resolution" value="4.20 A"/>
    <property type="chains" value="D2=1-347"/>
</dbReference>
<dbReference type="PDB" id="6QC4">
    <property type="method" value="EM"/>
    <property type="resolution" value="4.60 A"/>
    <property type="chains" value="D2=1-347"/>
</dbReference>
<dbReference type="PDB" id="6QC5">
    <property type="method" value="EM"/>
    <property type="resolution" value="4.30 A"/>
    <property type="chains" value="D2=1-347"/>
</dbReference>
<dbReference type="PDB" id="6QC6">
    <property type="method" value="EM"/>
    <property type="resolution" value="4.10 A"/>
    <property type="chains" value="D2=1-347"/>
</dbReference>
<dbReference type="PDB" id="6QC7">
    <property type="method" value="EM"/>
    <property type="resolution" value="4.40 A"/>
    <property type="chains" value="D2=1-347"/>
</dbReference>
<dbReference type="PDB" id="6QC8">
    <property type="method" value="EM"/>
    <property type="resolution" value="4.20 A"/>
    <property type="chains" value="D2=1-347"/>
</dbReference>
<dbReference type="PDB" id="6QC9">
    <property type="method" value="EM"/>
    <property type="resolution" value="5.70 A"/>
    <property type="chains" value="D2=1-347"/>
</dbReference>
<dbReference type="PDB" id="6QCA">
    <property type="method" value="EM"/>
    <property type="resolution" value="6.20 A"/>
    <property type="chains" value="D2=1-347"/>
</dbReference>
<dbReference type="PDB" id="6QCF">
    <property type="method" value="EM"/>
    <property type="resolution" value="6.50 A"/>
    <property type="chains" value="D2=1-347"/>
</dbReference>
<dbReference type="PDB" id="6ZKA">
    <property type="method" value="EM"/>
    <property type="resolution" value="2.50 A"/>
    <property type="chains" value="N=1-347"/>
</dbReference>
<dbReference type="PDB" id="6ZKB">
    <property type="method" value="EM"/>
    <property type="resolution" value="2.90 A"/>
    <property type="chains" value="N=1-347"/>
</dbReference>
<dbReference type="PDB" id="6ZKC">
    <property type="method" value="EM"/>
    <property type="resolution" value="3.10 A"/>
    <property type="chains" value="N=1-347"/>
</dbReference>
<dbReference type="PDB" id="6ZKD">
    <property type="method" value="EM"/>
    <property type="resolution" value="2.70 A"/>
    <property type="chains" value="N=1-347"/>
</dbReference>
<dbReference type="PDB" id="6ZKE">
    <property type="method" value="EM"/>
    <property type="resolution" value="2.60 A"/>
    <property type="chains" value="N=1-347"/>
</dbReference>
<dbReference type="PDB" id="6ZKF">
    <property type="method" value="EM"/>
    <property type="resolution" value="2.80 A"/>
    <property type="chains" value="N=1-347"/>
</dbReference>
<dbReference type="PDB" id="6ZKG">
    <property type="method" value="EM"/>
    <property type="resolution" value="3.40 A"/>
    <property type="chains" value="N=1-347"/>
</dbReference>
<dbReference type="PDB" id="6ZKH">
    <property type="method" value="EM"/>
    <property type="resolution" value="3.00 A"/>
    <property type="chains" value="N=1-347"/>
</dbReference>
<dbReference type="PDB" id="6ZKI">
    <property type="method" value="EM"/>
    <property type="resolution" value="2.80 A"/>
    <property type="chains" value="N=1-347"/>
</dbReference>
<dbReference type="PDB" id="6ZKJ">
    <property type="method" value="EM"/>
    <property type="resolution" value="3.00 A"/>
    <property type="chains" value="N=1-347"/>
</dbReference>
<dbReference type="PDB" id="6ZKK">
    <property type="method" value="EM"/>
    <property type="resolution" value="3.70 A"/>
    <property type="chains" value="N=1-347"/>
</dbReference>
<dbReference type="PDB" id="6ZKL">
    <property type="method" value="EM"/>
    <property type="resolution" value="3.10 A"/>
    <property type="chains" value="N=1-347"/>
</dbReference>
<dbReference type="PDB" id="6ZKM">
    <property type="method" value="EM"/>
    <property type="resolution" value="2.80 A"/>
    <property type="chains" value="N=1-347"/>
</dbReference>
<dbReference type="PDB" id="6ZKN">
    <property type="method" value="EM"/>
    <property type="resolution" value="2.90 A"/>
    <property type="chains" value="N=1-347"/>
</dbReference>
<dbReference type="PDB" id="6ZKO">
    <property type="method" value="EM"/>
    <property type="resolution" value="3.80 A"/>
    <property type="chains" value="N=1-347"/>
</dbReference>
<dbReference type="PDB" id="6ZKP">
    <property type="method" value="EM"/>
    <property type="resolution" value="3.20 A"/>
    <property type="chains" value="N=1-347"/>
</dbReference>
<dbReference type="PDB" id="6ZKQ">
    <property type="method" value="EM"/>
    <property type="resolution" value="3.30 A"/>
    <property type="chains" value="N=1-347"/>
</dbReference>
<dbReference type="PDB" id="6ZKR">
    <property type="method" value="EM"/>
    <property type="resolution" value="3.50 A"/>
    <property type="chains" value="N=1-347"/>
</dbReference>
<dbReference type="PDB" id="6ZKS">
    <property type="method" value="EM"/>
    <property type="resolution" value="3.10 A"/>
    <property type="chains" value="N=1-347"/>
</dbReference>
<dbReference type="PDB" id="6ZKT">
    <property type="method" value="EM"/>
    <property type="resolution" value="2.80 A"/>
    <property type="chains" value="N=1-347"/>
</dbReference>
<dbReference type="PDB" id="6ZKU">
    <property type="method" value="EM"/>
    <property type="resolution" value="3.00 A"/>
    <property type="chains" value="N=1-347"/>
</dbReference>
<dbReference type="PDB" id="6ZKV">
    <property type="method" value="EM"/>
    <property type="resolution" value="2.90 A"/>
    <property type="chains" value="N=1-347"/>
</dbReference>
<dbReference type="PDB" id="7ZD6">
    <property type="method" value="EM"/>
    <property type="resolution" value="3.16 A"/>
    <property type="chains" value="N=1-347"/>
</dbReference>
<dbReference type="PDB" id="7ZDH">
    <property type="method" value="EM"/>
    <property type="resolution" value="3.46 A"/>
    <property type="chains" value="N=1-347"/>
</dbReference>
<dbReference type="PDB" id="7ZDJ">
    <property type="method" value="EM"/>
    <property type="resolution" value="3.25 A"/>
    <property type="chains" value="N=1-347"/>
</dbReference>
<dbReference type="PDB" id="7ZDM">
    <property type="method" value="EM"/>
    <property type="resolution" value="3.44 A"/>
    <property type="chains" value="N=1-347"/>
</dbReference>
<dbReference type="PDB" id="7ZDP">
    <property type="method" value="EM"/>
    <property type="resolution" value="3.88 A"/>
    <property type="chains" value="N=1-347"/>
</dbReference>
<dbReference type="PDB" id="7ZEB">
    <property type="method" value="EM"/>
    <property type="resolution" value="3.80 A"/>
    <property type="chains" value="N=1-347"/>
</dbReference>
<dbReference type="PDBsum" id="5LNK"/>
<dbReference type="PDBsum" id="6Q9B"/>
<dbReference type="PDBsum" id="6QA9"/>
<dbReference type="PDBsum" id="6QBX"/>
<dbReference type="PDBsum" id="6QC2"/>
<dbReference type="PDBsum" id="6QC3"/>
<dbReference type="PDBsum" id="6QC4"/>
<dbReference type="PDBsum" id="6QC5"/>
<dbReference type="PDBsum" id="6QC6"/>
<dbReference type="PDBsum" id="6QC7"/>
<dbReference type="PDBsum" id="6QC8"/>
<dbReference type="PDBsum" id="6QC9"/>
<dbReference type="PDBsum" id="6QCA"/>
<dbReference type="PDBsum" id="6QCF"/>
<dbReference type="PDBsum" id="6ZKA"/>
<dbReference type="PDBsum" id="6ZKB"/>
<dbReference type="PDBsum" id="6ZKC"/>
<dbReference type="PDBsum" id="6ZKD"/>
<dbReference type="PDBsum" id="6ZKE"/>
<dbReference type="PDBsum" id="6ZKF"/>
<dbReference type="PDBsum" id="6ZKG"/>
<dbReference type="PDBsum" id="6ZKH"/>
<dbReference type="PDBsum" id="6ZKI"/>
<dbReference type="PDBsum" id="6ZKJ"/>
<dbReference type="PDBsum" id="6ZKK"/>
<dbReference type="PDBsum" id="6ZKL"/>
<dbReference type="PDBsum" id="6ZKM"/>
<dbReference type="PDBsum" id="6ZKN"/>
<dbReference type="PDBsum" id="6ZKO"/>
<dbReference type="PDBsum" id="6ZKP"/>
<dbReference type="PDBsum" id="6ZKQ"/>
<dbReference type="PDBsum" id="6ZKR"/>
<dbReference type="PDBsum" id="6ZKS"/>
<dbReference type="PDBsum" id="6ZKT"/>
<dbReference type="PDBsum" id="6ZKU"/>
<dbReference type="PDBsum" id="6ZKV"/>
<dbReference type="PDBsum" id="7ZD6"/>
<dbReference type="PDBsum" id="7ZDH"/>
<dbReference type="PDBsum" id="7ZDJ"/>
<dbReference type="PDBsum" id="7ZDM"/>
<dbReference type="PDBsum" id="7ZDP"/>
<dbReference type="PDBsum" id="7ZEB"/>
<dbReference type="EMDB" id="EMD-4479"/>
<dbReference type="EMDB" id="EMD-4482"/>
<dbReference type="EMDB" id="EMD-4493"/>
<dbReference type="EMDB" id="EMD-4495"/>
<dbReference type="EMDB" id="EMD-4496"/>
<dbReference type="EMDB" id="EMD-4497"/>
<dbReference type="EMDB" id="EMD-4498"/>
<dbReference type="EMDB" id="EMD-4499"/>
<dbReference type="EMDB" id="EMD-4500"/>
<dbReference type="EMDB" id="EMD-4501"/>
<dbReference type="EMDB" id="EMD-4502"/>
<dbReference type="EMDB" id="EMD-4505"/>
<dbReference type="EMDB" id="EMD-8128"/>
<dbReference type="SMR" id="O78748"/>
<dbReference type="STRING" id="9940.ENSOARP00000000002"/>
<dbReference type="PaxDb" id="9940-ENSOARP00000000002"/>
<dbReference type="Ensembl" id="ENSOART00025000011">
    <property type="protein sequence ID" value="ENSOARP00025000003"/>
    <property type="gene ID" value="ENSOARG00025000011"/>
</dbReference>
<dbReference type="Ensembl" id="ENSOART00040000011">
    <property type="protein sequence ID" value="ENSOARP00040000003"/>
    <property type="gene ID" value="ENSOARG00040000011"/>
</dbReference>
<dbReference type="Ensembl" id="ENSOART00180000011">
    <property type="protein sequence ID" value="ENSOARP00180000003"/>
    <property type="gene ID" value="ENSOARG00180000011"/>
</dbReference>
<dbReference type="Ensembl" id="ENSOART00185000011">
    <property type="protein sequence ID" value="ENSOARP00185000003"/>
    <property type="gene ID" value="ENSOARG00185000011"/>
</dbReference>
<dbReference type="Ensembl" id="ENSOART00215000011">
    <property type="protein sequence ID" value="ENSOARP00215000003"/>
    <property type="gene ID" value="ENSOARG00215000011"/>
</dbReference>
<dbReference type="Ensembl" id="ENSOART00220000011">
    <property type="protein sequence ID" value="ENSOARP00220000003"/>
    <property type="gene ID" value="ENSOARG00220000011"/>
</dbReference>
<dbReference type="Ensembl" id="ENSOART00225000011">
    <property type="protein sequence ID" value="ENSOARP00225000003"/>
    <property type="gene ID" value="ENSOARG00225000011"/>
</dbReference>
<dbReference type="Ensembl" id="ENSOART00260000011">
    <property type="protein sequence ID" value="ENSOARP00260000003"/>
    <property type="gene ID" value="ENSOARG00260000011"/>
</dbReference>
<dbReference type="GeneID" id="808250"/>
<dbReference type="KEGG" id="oas:808250"/>
<dbReference type="CTD" id="4536"/>
<dbReference type="eggNOG" id="KOG4668">
    <property type="taxonomic scope" value="Eukaryota"/>
</dbReference>
<dbReference type="HOGENOM" id="CLU_007100_1_3_1"/>
<dbReference type="OMA" id="HFWVPEV"/>
<dbReference type="OrthoDB" id="4092844at2759"/>
<dbReference type="Proteomes" id="UP000002356">
    <property type="component" value="Mitochondrion"/>
</dbReference>
<dbReference type="Bgee" id="ENSOARG00000000010">
    <property type="expression patterns" value="Expressed in cardiac muscle tissue of left auricle and 55 other cell types or tissues"/>
</dbReference>
<dbReference type="ExpressionAtlas" id="O78748">
    <property type="expression patterns" value="baseline"/>
</dbReference>
<dbReference type="GO" id="GO:0005743">
    <property type="term" value="C:mitochondrial inner membrane"/>
    <property type="evidence" value="ECO:0000250"/>
    <property type="project" value="UniProtKB"/>
</dbReference>
<dbReference type="GO" id="GO:0045271">
    <property type="term" value="C:respiratory chain complex I"/>
    <property type="evidence" value="ECO:0007669"/>
    <property type="project" value="Ensembl"/>
</dbReference>
<dbReference type="GO" id="GO:0008137">
    <property type="term" value="F:NADH dehydrogenase (ubiquinone) activity"/>
    <property type="evidence" value="ECO:0000250"/>
    <property type="project" value="UniProtKB"/>
</dbReference>
<dbReference type="GO" id="GO:0006120">
    <property type="term" value="P:mitochondrial electron transport, NADH to ubiquinone"/>
    <property type="evidence" value="ECO:0000250"/>
    <property type="project" value="UniProtKB"/>
</dbReference>
<dbReference type="GO" id="GO:0032981">
    <property type="term" value="P:mitochondrial respiratory chain complex I assembly"/>
    <property type="evidence" value="ECO:0000250"/>
    <property type="project" value="UniProtKB"/>
</dbReference>
<dbReference type="GO" id="GO:0072593">
    <property type="term" value="P:reactive oxygen species metabolic process"/>
    <property type="evidence" value="ECO:0007669"/>
    <property type="project" value="Ensembl"/>
</dbReference>
<dbReference type="InterPro" id="IPR050175">
    <property type="entry name" value="Complex_I_Subunit_2"/>
</dbReference>
<dbReference type="InterPro" id="IPR010933">
    <property type="entry name" value="NADH_DH_su2_C"/>
</dbReference>
<dbReference type="InterPro" id="IPR003917">
    <property type="entry name" value="NADH_UbQ_OxRdtase_chain2"/>
</dbReference>
<dbReference type="InterPro" id="IPR001750">
    <property type="entry name" value="ND/Mrp_TM"/>
</dbReference>
<dbReference type="PANTHER" id="PTHR46552">
    <property type="entry name" value="NADH-UBIQUINONE OXIDOREDUCTASE CHAIN 2"/>
    <property type="match status" value="1"/>
</dbReference>
<dbReference type="PANTHER" id="PTHR46552:SF1">
    <property type="entry name" value="NADH-UBIQUINONE OXIDOREDUCTASE CHAIN 2"/>
    <property type="match status" value="1"/>
</dbReference>
<dbReference type="Pfam" id="PF06444">
    <property type="entry name" value="NADH_dehy_S2_C"/>
    <property type="match status" value="1"/>
</dbReference>
<dbReference type="Pfam" id="PF00361">
    <property type="entry name" value="Proton_antipo_M"/>
    <property type="match status" value="1"/>
</dbReference>
<dbReference type="PRINTS" id="PR01436">
    <property type="entry name" value="NADHDHGNASE2"/>
</dbReference>
<comment type="function">
    <text evidence="1">Core subunit of the mitochondrial membrane respiratory chain NADH dehydrogenase (Complex I) which catalyzes electron transfer from NADH through the respiratory chain, using ubiquinone as an electron acceptor. Essential for the catalytic activity and assembly of complex I.</text>
</comment>
<comment type="catalytic activity">
    <reaction evidence="1">
        <text>a ubiquinone + NADH + 5 H(+)(in) = a ubiquinol + NAD(+) + 4 H(+)(out)</text>
        <dbReference type="Rhea" id="RHEA:29091"/>
        <dbReference type="Rhea" id="RHEA-COMP:9565"/>
        <dbReference type="Rhea" id="RHEA-COMP:9566"/>
        <dbReference type="ChEBI" id="CHEBI:15378"/>
        <dbReference type="ChEBI" id="CHEBI:16389"/>
        <dbReference type="ChEBI" id="CHEBI:17976"/>
        <dbReference type="ChEBI" id="CHEBI:57540"/>
        <dbReference type="ChEBI" id="CHEBI:57945"/>
        <dbReference type="EC" id="7.1.1.2"/>
    </reaction>
</comment>
<comment type="subunit">
    <text evidence="1 2">Core subunit of respiratory chain NADH dehydrogenase (Complex I) which is composed of 45 different subunits. Interacts with TMEM242 (By similarity).</text>
</comment>
<comment type="subcellular location">
    <subcellularLocation>
        <location evidence="2">Mitochondrion inner membrane</location>
        <topology evidence="3">Multi-pass membrane protein</topology>
    </subcellularLocation>
</comment>
<comment type="similarity">
    <text evidence="4">Belongs to the complex I subunit 2 family.</text>
</comment>
<sequence length="347" mass="39128">MNPIILIIILMTVMLGTIIVMISTHWLLIWIGFEMNMLAIIPIMMKKHNPRATEASTKYFLTQSTASMLLMMAIIINLMFSGQWTVMKLFNPMASMLMTMALAMKLGMAPFHFWVPEVTQGIPLSSGLILLTWQKLAPMSVLYQILPSINLDLILTLSILSITIGGWGGLNQTQLRKIMAYSSIAHMGWMTAVLLYNPTMTLLNLIIYIIMTSTMFTLFMANSTTTTLSLSHTWNKAPIMTILVLITLLSMGGLPPLSGFMPKWMIIQEMTKNDSIILPTLMAITALLNLYFYMRLTYSTALTMFPSTNNMKMKWQFPTTKRMTLLPTMTVLSTMLLPLTPILSILE</sequence>
<gene>
    <name evidence="1" type="primary">MT-ND2</name>
    <name type="synonym">MTND2</name>
    <name type="synonym">NADH2</name>
    <name type="synonym">ND2</name>
</gene>
<feature type="chain" id="PRO_0000117638" description="NADH-ubiquinone oxidoreductase chain 2">
    <location>
        <begin position="1"/>
        <end position="347"/>
    </location>
</feature>
<feature type="transmembrane region" description="Helical" evidence="3">
    <location>
        <begin position="3"/>
        <end position="23"/>
    </location>
</feature>
<feature type="transmembrane region" description="Helical" evidence="3">
    <location>
        <begin position="25"/>
        <end position="45"/>
    </location>
</feature>
<feature type="transmembrane region" description="Helical" evidence="3">
    <location>
        <begin position="67"/>
        <end position="87"/>
    </location>
</feature>
<feature type="transmembrane region" description="Helical" evidence="3">
    <location>
        <begin position="96"/>
        <end position="116"/>
    </location>
</feature>
<feature type="transmembrane region" description="Helical" evidence="3">
    <location>
        <begin position="122"/>
        <end position="142"/>
    </location>
</feature>
<feature type="transmembrane region" description="Helical" evidence="3">
    <location>
        <begin position="145"/>
        <end position="165"/>
    </location>
</feature>
<feature type="transmembrane region" description="Helical" evidence="3">
    <location>
        <begin position="178"/>
        <end position="198"/>
    </location>
</feature>
<feature type="transmembrane region" description="Helical" evidence="3">
    <location>
        <begin position="200"/>
        <end position="220"/>
    </location>
</feature>
<feature type="transmembrane region" description="Helical" evidence="3">
    <location>
        <begin position="237"/>
        <end position="257"/>
    </location>
</feature>
<feature type="transmembrane region" description="Helical" evidence="3">
    <location>
        <begin position="274"/>
        <end position="294"/>
    </location>
</feature>
<feature type="transmembrane region" description="Helical" evidence="3">
    <location>
        <begin position="325"/>
        <end position="345"/>
    </location>
</feature>
<feature type="helix" evidence="6">
    <location>
        <begin position="3"/>
        <end position="22"/>
    </location>
</feature>
<feature type="helix" evidence="6">
    <location>
        <begin position="26"/>
        <end position="44"/>
    </location>
</feature>
<feature type="helix" evidence="6">
    <location>
        <begin position="50"/>
        <end position="81"/>
    </location>
</feature>
<feature type="strand" evidence="6">
    <location>
        <begin position="85"/>
        <end position="88"/>
    </location>
</feature>
<feature type="helix" evidence="6">
    <location>
        <begin position="92"/>
        <end position="106"/>
    </location>
</feature>
<feature type="helix" evidence="8">
    <location>
        <begin position="112"/>
        <end position="114"/>
    </location>
</feature>
<feature type="helix" evidence="6">
    <location>
        <begin position="115"/>
        <end position="121"/>
    </location>
</feature>
<feature type="helix" evidence="6">
    <location>
        <begin position="124"/>
        <end position="144"/>
    </location>
</feature>
<feature type="turn" evidence="6">
    <location>
        <begin position="145"/>
        <end position="148"/>
    </location>
</feature>
<feature type="helix" evidence="6">
    <location>
        <begin position="151"/>
        <end position="170"/>
    </location>
</feature>
<feature type="helix" evidence="6">
    <location>
        <begin position="175"/>
        <end position="192"/>
    </location>
</feature>
<feature type="turn" evidence="6">
    <location>
        <begin position="193"/>
        <end position="196"/>
    </location>
</feature>
<feature type="helix" evidence="6">
    <location>
        <begin position="198"/>
        <end position="222"/>
    </location>
</feature>
<feature type="helix" evidence="6">
    <location>
        <begin position="227"/>
        <end position="230"/>
    </location>
</feature>
<feature type="helix" evidence="6">
    <location>
        <begin position="231"/>
        <end position="235"/>
    </location>
</feature>
<feature type="helix" evidence="6">
    <location>
        <begin position="238"/>
        <end position="251"/>
    </location>
</feature>
<feature type="helix" evidence="6">
    <location>
        <begin position="260"/>
        <end position="270"/>
    </location>
</feature>
<feature type="turn" evidence="6">
    <location>
        <begin position="271"/>
        <end position="274"/>
    </location>
</feature>
<feature type="helix" evidence="6">
    <location>
        <begin position="277"/>
        <end position="300"/>
    </location>
</feature>
<feature type="turn" evidence="9">
    <location>
        <begin position="301"/>
        <end position="303"/>
    </location>
</feature>
<feature type="strand" evidence="7">
    <location>
        <begin position="307"/>
        <end position="309"/>
    </location>
</feature>
<feature type="helix" evidence="6">
    <location>
        <begin position="311"/>
        <end position="314"/>
    </location>
</feature>
<feature type="helix" evidence="6">
    <location>
        <begin position="326"/>
        <end position="334"/>
    </location>
</feature>
<feature type="helix" evidence="6">
    <location>
        <begin position="337"/>
        <end position="346"/>
    </location>
</feature>